<feature type="chain" id="PRO_1000064686" description="Ribosome maturation factor RimP">
    <location>
        <begin position="1"/>
        <end position="253"/>
    </location>
</feature>
<feature type="region of interest" description="Disordered" evidence="2">
    <location>
        <begin position="186"/>
        <end position="253"/>
    </location>
</feature>
<feature type="compositionally biased region" description="Basic and acidic residues" evidence="2">
    <location>
        <begin position="186"/>
        <end position="199"/>
    </location>
</feature>
<feature type="compositionally biased region" description="Low complexity" evidence="2">
    <location>
        <begin position="201"/>
        <end position="216"/>
    </location>
</feature>
<feature type="compositionally biased region" description="Basic and acidic residues" evidence="2">
    <location>
        <begin position="240"/>
        <end position="253"/>
    </location>
</feature>
<gene>
    <name evidence="1" type="primary">rimP</name>
    <name type="ordered locus">BBta_0054</name>
</gene>
<proteinExistence type="inferred from homology"/>
<accession>A5E863</accession>
<sequence length="253" mass="27561">MTEPTFAAADTDLLTEPRLVVEPGVAARVAAVAEPVLQGMGYRLVRIRISGEAGCTVQVMAERPDGTMQIEDCEAVSRALSPVLDIADPIDRAYRLEISSPGIDRPLVRRTDFERHIGHLVKIEMAVAHQNRKRFRGIITGLDGDGVCITRDDVAKDQDPSVVLPMTDIGDAKLVLTDELIAESMRRGKAAEREKKRDLGLAPPLAPHAKPAAQAKPKPKLKDGQAAKKPLPTNTKKHRLAADRARRGEIDPD</sequence>
<organism>
    <name type="scientific">Bradyrhizobium sp. (strain BTAi1 / ATCC BAA-1182)</name>
    <dbReference type="NCBI Taxonomy" id="288000"/>
    <lineage>
        <taxon>Bacteria</taxon>
        <taxon>Pseudomonadati</taxon>
        <taxon>Pseudomonadota</taxon>
        <taxon>Alphaproteobacteria</taxon>
        <taxon>Hyphomicrobiales</taxon>
        <taxon>Nitrobacteraceae</taxon>
        <taxon>Bradyrhizobium</taxon>
    </lineage>
</organism>
<name>RIMP_BRASB</name>
<comment type="function">
    <text evidence="1">Required for maturation of 30S ribosomal subunits.</text>
</comment>
<comment type="subcellular location">
    <subcellularLocation>
        <location evidence="1">Cytoplasm</location>
    </subcellularLocation>
</comment>
<comment type="similarity">
    <text evidence="1">Belongs to the RimP family.</text>
</comment>
<dbReference type="EMBL" id="CP000494">
    <property type="protein sequence ID" value="ABQ32357.1"/>
    <property type="molecule type" value="Genomic_DNA"/>
</dbReference>
<dbReference type="RefSeq" id="WP_011942581.1">
    <property type="nucleotide sequence ID" value="NC_009485.1"/>
</dbReference>
<dbReference type="SMR" id="A5E863"/>
<dbReference type="STRING" id="288000.BBta_0054"/>
<dbReference type="KEGG" id="bbt:BBta_0054"/>
<dbReference type="eggNOG" id="COG0779">
    <property type="taxonomic scope" value="Bacteria"/>
</dbReference>
<dbReference type="HOGENOM" id="CLU_070525_0_0_5"/>
<dbReference type="OrthoDB" id="9805006at2"/>
<dbReference type="Proteomes" id="UP000000246">
    <property type="component" value="Chromosome"/>
</dbReference>
<dbReference type="GO" id="GO:0005829">
    <property type="term" value="C:cytosol"/>
    <property type="evidence" value="ECO:0007669"/>
    <property type="project" value="TreeGrafter"/>
</dbReference>
<dbReference type="GO" id="GO:0000028">
    <property type="term" value="P:ribosomal small subunit assembly"/>
    <property type="evidence" value="ECO:0007669"/>
    <property type="project" value="TreeGrafter"/>
</dbReference>
<dbReference type="GO" id="GO:0006412">
    <property type="term" value="P:translation"/>
    <property type="evidence" value="ECO:0007669"/>
    <property type="project" value="TreeGrafter"/>
</dbReference>
<dbReference type="CDD" id="cd01734">
    <property type="entry name" value="YlxS_C"/>
    <property type="match status" value="1"/>
</dbReference>
<dbReference type="Gene3D" id="2.30.30.180">
    <property type="entry name" value="Ribosome maturation factor RimP, C-terminal domain"/>
    <property type="match status" value="1"/>
</dbReference>
<dbReference type="Gene3D" id="3.30.300.70">
    <property type="entry name" value="RimP-like superfamily, N-terminal"/>
    <property type="match status" value="1"/>
</dbReference>
<dbReference type="HAMAP" id="MF_01077">
    <property type="entry name" value="RimP"/>
    <property type="match status" value="1"/>
</dbReference>
<dbReference type="InterPro" id="IPR003728">
    <property type="entry name" value="Ribosome_maturation_RimP"/>
</dbReference>
<dbReference type="InterPro" id="IPR028998">
    <property type="entry name" value="RimP_C"/>
</dbReference>
<dbReference type="InterPro" id="IPR036847">
    <property type="entry name" value="RimP_C_sf"/>
</dbReference>
<dbReference type="InterPro" id="IPR028989">
    <property type="entry name" value="RimP_N"/>
</dbReference>
<dbReference type="InterPro" id="IPR035956">
    <property type="entry name" value="RimP_N_sf"/>
</dbReference>
<dbReference type="NCBIfam" id="NF000932">
    <property type="entry name" value="PRK00092.2-5"/>
    <property type="match status" value="1"/>
</dbReference>
<dbReference type="NCBIfam" id="NF000933">
    <property type="entry name" value="PRK00092.2-6"/>
    <property type="match status" value="1"/>
</dbReference>
<dbReference type="PANTHER" id="PTHR33867">
    <property type="entry name" value="RIBOSOME MATURATION FACTOR RIMP"/>
    <property type="match status" value="1"/>
</dbReference>
<dbReference type="PANTHER" id="PTHR33867:SF1">
    <property type="entry name" value="RIBOSOME MATURATION FACTOR RIMP"/>
    <property type="match status" value="1"/>
</dbReference>
<dbReference type="Pfam" id="PF17384">
    <property type="entry name" value="DUF150_C"/>
    <property type="match status" value="1"/>
</dbReference>
<dbReference type="Pfam" id="PF02576">
    <property type="entry name" value="RimP_N"/>
    <property type="match status" value="1"/>
</dbReference>
<dbReference type="SUPFAM" id="SSF74942">
    <property type="entry name" value="YhbC-like, C-terminal domain"/>
    <property type="match status" value="1"/>
</dbReference>
<dbReference type="SUPFAM" id="SSF75420">
    <property type="entry name" value="YhbC-like, N-terminal domain"/>
    <property type="match status" value="1"/>
</dbReference>
<reference key="1">
    <citation type="journal article" date="2007" name="Science">
        <title>Legumes symbioses: absence of nod genes in photosynthetic bradyrhizobia.</title>
        <authorList>
            <person name="Giraud E."/>
            <person name="Moulin L."/>
            <person name="Vallenet D."/>
            <person name="Barbe V."/>
            <person name="Cytryn E."/>
            <person name="Avarre J.-C."/>
            <person name="Jaubert M."/>
            <person name="Simon D."/>
            <person name="Cartieaux F."/>
            <person name="Prin Y."/>
            <person name="Bena G."/>
            <person name="Hannibal L."/>
            <person name="Fardoux J."/>
            <person name="Kojadinovic M."/>
            <person name="Vuillet L."/>
            <person name="Lajus A."/>
            <person name="Cruveiller S."/>
            <person name="Rouy Z."/>
            <person name="Mangenot S."/>
            <person name="Segurens B."/>
            <person name="Dossat C."/>
            <person name="Franck W.L."/>
            <person name="Chang W.-S."/>
            <person name="Saunders E."/>
            <person name="Bruce D."/>
            <person name="Richardson P."/>
            <person name="Normand P."/>
            <person name="Dreyfus B."/>
            <person name="Pignol D."/>
            <person name="Stacey G."/>
            <person name="Emerich D."/>
            <person name="Vermeglio A."/>
            <person name="Medigue C."/>
            <person name="Sadowsky M."/>
        </authorList>
    </citation>
    <scope>NUCLEOTIDE SEQUENCE [LARGE SCALE GENOMIC DNA]</scope>
    <source>
        <strain>BTAi1 / ATCC BAA-1182</strain>
    </source>
</reference>
<keyword id="KW-0963">Cytoplasm</keyword>
<keyword id="KW-1185">Reference proteome</keyword>
<keyword id="KW-0690">Ribosome biogenesis</keyword>
<evidence type="ECO:0000255" key="1">
    <source>
        <dbReference type="HAMAP-Rule" id="MF_01077"/>
    </source>
</evidence>
<evidence type="ECO:0000256" key="2">
    <source>
        <dbReference type="SAM" id="MobiDB-lite"/>
    </source>
</evidence>
<protein>
    <recommendedName>
        <fullName evidence="1">Ribosome maturation factor RimP</fullName>
    </recommendedName>
</protein>